<proteinExistence type="evidence at transcript level"/>
<accession>D2Y276</accession>
<organism>
    <name type="scientific">Cyriopagopus hainanus</name>
    <name type="common">Chinese bird spider</name>
    <name type="synonym">Haplopelma hainanum</name>
    <dbReference type="NCBI Taxonomy" id="209901"/>
    <lineage>
        <taxon>Eukaryota</taxon>
        <taxon>Metazoa</taxon>
        <taxon>Ecdysozoa</taxon>
        <taxon>Arthropoda</taxon>
        <taxon>Chelicerata</taxon>
        <taxon>Arachnida</taxon>
        <taxon>Araneae</taxon>
        <taxon>Mygalomorphae</taxon>
        <taxon>Theraphosidae</taxon>
        <taxon>Haplopelma</taxon>
    </lineage>
</organism>
<name>H16F2_CYRHA</name>
<sequence>MNTVRVTFLLVFVLAVSLGQADKDENRMEMQEKTEQGKSYLDFAENLLLQKLEELEAKLLEEDSEESRNSRQKRCIGEGVPCDENDPRCCSGLVCLKPTLHGIWYKSYYCYRK</sequence>
<comment type="function">
    <text evidence="1">Probable ion channel inhibitor.</text>
</comment>
<comment type="subcellular location">
    <subcellularLocation>
        <location evidence="1">Secreted</location>
    </subcellularLocation>
</comment>
<comment type="tissue specificity">
    <text>Expressed by the venom gland.</text>
</comment>
<comment type="domain">
    <text evidence="1">The presence of a 'disulfide through disulfide knot' structurally defines this protein as a knottin.</text>
</comment>
<comment type="similarity">
    <text evidence="4">Belongs to the neurotoxin 14 (magi-1) family. 01 (HNTX-16) subfamily.</text>
</comment>
<dbReference type="EMBL" id="GU292953">
    <property type="protein sequence ID" value="ADB56769.1"/>
    <property type="molecule type" value="mRNA"/>
</dbReference>
<dbReference type="ArachnoServer" id="AS001737">
    <property type="toxin name" value="U11-theraphotoxin-Hhn1f"/>
</dbReference>
<dbReference type="GO" id="GO:0005576">
    <property type="term" value="C:extracellular region"/>
    <property type="evidence" value="ECO:0007669"/>
    <property type="project" value="UniProtKB-SubCell"/>
</dbReference>
<dbReference type="GO" id="GO:0019871">
    <property type="term" value="F:sodium channel inhibitor activity"/>
    <property type="evidence" value="ECO:0007669"/>
    <property type="project" value="InterPro"/>
</dbReference>
<dbReference type="GO" id="GO:0090729">
    <property type="term" value="F:toxin activity"/>
    <property type="evidence" value="ECO:0007669"/>
    <property type="project" value="UniProtKB-KW"/>
</dbReference>
<dbReference type="InterPro" id="IPR012627">
    <property type="entry name" value="Toxin_22"/>
</dbReference>
<dbReference type="Pfam" id="PF08092">
    <property type="entry name" value="Toxin_22"/>
    <property type="match status" value="1"/>
</dbReference>
<protein>
    <recommendedName>
        <fullName>U11-theraphotoxin-Hhn1f</fullName>
        <shortName>U11-TRTX-Hhn1f</shortName>
    </recommendedName>
    <alternativeName>
        <fullName>Hainantoxin-XVI-6.2</fullName>
        <shortName>HNTX-XVI-6.2</shortName>
    </alternativeName>
</protein>
<feature type="signal peptide" evidence="2">
    <location>
        <begin position="1"/>
        <end position="21"/>
    </location>
</feature>
<feature type="propeptide" id="PRO_0000400927" evidence="1">
    <location>
        <begin position="22"/>
        <end position="74"/>
    </location>
</feature>
<feature type="peptide" id="PRO_0000400928" description="U11-theraphotoxin-Hhn1f">
    <location>
        <begin position="75"/>
        <end position="113"/>
    </location>
</feature>
<feature type="region of interest" description="Disordered" evidence="3">
    <location>
        <begin position="61"/>
        <end position="83"/>
    </location>
</feature>
<feature type="disulfide bond" evidence="1">
    <location>
        <begin position="75"/>
        <end position="90"/>
    </location>
</feature>
<feature type="disulfide bond" evidence="1">
    <location>
        <begin position="82"/>
        <end position="95"/>
    </location>
</feature>
<feature type="disulfide bond" evidence="1">
    <location>
        <begin position="89"/>
        <end position="110"/>
    </location>
</feature>
<reference key="1">
    <citation type="journal article" date="2010" name="J. Proteome Res.">
        <title>Molecular diversification of peptide toxins from the tarantula Haplopelma hainanum (Ornithoctonus hainana) venom based on transcriptomic, peptidomic, and genomic analyses.</title>
        <authorList>
            <person name="Tang X."/>
            <person name="Zhang Y."/>
            <person name="Hu W."/>
            <person name="Xu D."/>
            <person name="Tao H."/>
            <person name="Yang X."/>
            <person name="Li Y."/>
            <person name="Jiang L."/>
            <person name="Liang S."/>
        </authorList>
    </citation>
    <scope>NUCLEOTIDE SEQUENCE [LARGE SCALE MRNA]</scope>
    <source>
        <tissue>Venom gland</tissue>
    </source>
</reference>
<evidence type="ECO:0000250" key="1"/>
<evidence type="ECO:0000255" key="2"/>
<evidence type="ECO:0000256" key="3">
    <source>
        <dbReference type="SAM" id="MobiDB-lite"/>
    </source>
</evidence>
<evidence type="ECO:0000305" key="4"/>
<keyword id="KW-1015">Disulfide bond</keyword>
<keyword id="KW-0872">Ion channel impairing toxin</keyword>
<keyword id="KW-0960">Knottin</keyword>
<keyword id="KW-0964">Secreted</keyword>
<keyword id="KW-0732">Signal</keyword>
<keyword id="KW-0800">Toxin</keyword>